<evidence type="ECO:0000255" key="1">
    <source>
        <dbReference type="HAMAP-Rule" id="MF_01661"/>
    </source>
</evidence>
<comment type="function">
    <text evidence="1">Catalyzes the interconversion of beta-pyran and beta-furan forms of D-ribose.</text>
</comment>
<comment type="catalytic activity">
    <reaction evidence="1">
        <text>beta-D-ribopyranose = beta-D-ribofuranose</text>
        <dbReference type="Rhea" id="RHEA:25432"/>
        <dbReference type="ChEBI" id="CHEBI:27476"/>
        <dbReference type="ChEBI" id="CHEBI:47002"/>
        <dbReference type="EC" id="5.4.99.62"/>
    </reaction>
</comment>
<comment type="pathway">
    <text evidence="1">Carbohydrate metabolism; D-ribose degradation; D-ribose 5-phosphate from beta-D-ribopyranose: step 1/2.</text>
</comment>
<comment type="subunit">
    <text evidence="1">Homodecamer.</text>
</comment>
<comment type="subcellular location">
    <subcellularLocation>
        <location evidence="1">Cytoplasm</location>
    </subcellularLocation>
</comment>
<comment type="similarity">
    <text evidence="1">Belongs to the RbsD / FucU family. RbsD subfamily.</text>
</comment>
<name>RBSD_SHEPA</name>
<sequence length="139" mass="15136">MNKHALLNADMNYLAATLGHTDEVTICDAGLPIPAQVKRIDLALTHGVPSFIATVKVWLATSQIEGIVLAQEFADVSPECHQALLAEIEAEQQATGRTFSVEYISHEAFKQRTGHSRAVIRTGECTPYANVIFKTGVVF</sequence>
<feature type="chain" id="PRO_0000346256" description="D-ribose pyranase">
    <location>
        <begin position="1"/>
        <end position="139"/>
    </location>
</feature>
<feature type="active site" description="Proton donor" evidence="1">
    <location>
        <position position="20"/>
    </location>
</feature>
<feature type="binding site" evidence="1">
    <location>
        <position position="28"/>
    </location>
    <ligand>
        <name>substrate</name>
    </ligand>
</feature>
<feature type="binding site" evidence="1">
    <location>
        <position position="106"/>
    </location>
    <ligand>
        <name>substrate</name>
    </ligand>
</feature>
<feature type="binding site" evidence="1">
    <location>
        <begin position="128"/>
        <end position="130"/>
    </location>
    <ligand>
        <name>substrate</name>
    </ligand>
</feature>
<reference key="1">
    <citation type="submission" date="2007-10" db="EMBL/GenBank/DDBJ databases">
        <title>Complete sequence of Shewanella pealeana ATCC 700345.</title>
        <authorList>
            <consortium name="US DOE Joint Genome Institute"/>
            <person name="Copeland A."/>
            <person name="Lucas S."/>
            <person name="Lapidus A."/>
            <person name="Barry K."/>
            <person name="Glavina del Rio T."/>
            <person name="Dalin E."/>
            <person name="Tice H."/>
            <person name="Pitluck S."/>
            <person name="Chertkov O."/>
            <person name="Brettin T."/>
            <person name="Bruce D."/>
            <person name="Detter J.C."/>
            <person name="Han C."/>
            <person name="Schmutz J."/>
            <person name="Larimer F."/>
            <person name="Land M."/>
            <person name="Hauser L."/>
            <person name="Kyrpides N."/>
            <person name="Kim E."/>
            <person name="Zhao J.-S.Z."/>
            <person name="Manno D."/>
            <person name="Hawari J."/>
            <person name="Richardson P."/>
        </authorList>
    </citation>
    <scope>NUCLEOTIDE SEQUENCE [LARGE SCALE GENOMIC DNA]</scope>
    <source>
        <strain>ATCC 700345 / ANG-SQ1</strain>
    </source>
</reference>
<organism>
    <name type="scientific">Shewanella pealeana (strain ATCC 700345 / ANG-SQ1)</name>
    <dbReference type="NCBI Taxonomy" id="398579"/>
    <lineage>
        <taxon>Bacteria</taxon>
        <taxon>Pseudomonadati</taxon>
        <taxon>Pseudomonadota</taxon>
        <taxon>Gammaproteobacteria</taxon>
        <taxon>Alteromonadales</taxon>
        <taxon>Shewanellaceae</taxon>
        <taxon>Shewanella</taxon>
    </lineage>
</organism>
<gene>
    <name evidence="1" type="primary">rbsD</name>
    <name type="ordered locus">Spea_0514</name>
</gene>
<dbReference type="EC" id="5.4.99.62" evidence="1"/>
<dbReference type="EMBL" id="CP000851">
    <property type="protein sequence ID" value="ABV85842.1"/>
    <property type="molecule type" value="Genomic_DNA"/>
</dbReference>
<dbReference type="RefSeq" id="WP_012153780.1">
    <property type="nucleotide sequence ID" value="NC_009901.1"/>
</dbReference>
<dbReference type="SMR" id="A8GZV5"/>
<dbReference type="STRING" id="398579.Spea_0514"/>
<dbReference type="KEGG" id="spl:Spea_0514"/>
<dbReference type="eggNOG" id="COG1869">
    <property type="taxonomic scope" value="Bacteria"/>
</dbReference>
<dbReference type="HOGENOM" id="CLU_135498_0_0_6"/>
<dbReference type="OrthoDB" id="9805009at2"/>
<dbReference type="UniPathway" id="UPA00916">
    <property type="reaction ID" value="UER00888"/>
</dbReference>
<dbReference type="Proteomes" id="UP000002608">
    <property type="component" value="Chromosome"/>
</dbReference>
<dbReference type="GO" id="GO:0005829">
    <property type="term" value="C:cytosol"/>
    <property type="evidence" value="ECO:0007669"/>
    <property type="project" value="TreeGrafter"/>
</dbReference>
<dbReference type="GO" id="GO:0062193">
    <property type="term" value="F:D-ribose pyranase activity"/>
    <property type="evidence" value="ECO:0007669"/>
    <property type="project" value="UniProtKB-EC"/>
</dbReference>
<dbReference type="GO" id="GO:0016872">
    <property type="term" value="F:intramolecular lyase activity"/>
    <property type="evidence" value="ECO:0007669"/>
    <property type="project" value="UniProtKB-UniRule"/>
</dbReference>
<dbReference type="GO" id="GO:0048029">
    <property type="term" value="F:monosaccharide binding"/>
    <property type="evidence" value="ECO:0007669"/>
    <property type="project" value="InterPro"/>
</dbReference>
<dbReference type="GO" id="GO:0019303">
    <property type="term" value="P:D-ribose catabolic process"/>
    <property type="evidence" value="ECO:0007669"/>
    <property type="project" value="UniProtKB-UniRule"/>
</dbReference>
<dbReference type="Gene3D" id="3.40.1650.10">
    <property type="entry name" value="RbsD-like domain"/>
    <property type="match status" value="1"/>
</dbReference>
<dbReference type="HAMAP" id="MF_01661">
    <property type="entry name" value="D_rib_pyranase"/>
    <property type="match status" value="1"/>
</dbReference>
<dbReference type="InterPro" id="IPR023064">
    <property type="entry name" value="D-ribose_pyranase"/>
</dbReference>
<dbReference type="InterPro" id="IPR023750">
    <property type="entry name" value="RbsD-like_sf"/>
</dbReference>
<dbReference type="InterPro" id="IPR007721">
    <property type="entry name" value="RbsD_FucU"/>
</dbReference>
<dbReference type="NCBIfam" id="NF008761">
    <property type="entry name" value="PRK11797.1"/>
    <property type="match status" value="1"/>
</dbReference>
<dbReference type="PANTHER" id="PTHR37831">
    <property type="entry name" value="D-RIBOSE PYRANASE"/>
    <property type="match status" value="1"/>
</dbReference>
<dbReference type="PANTHER" id="PTHR37831:SF1">
    <property type="entry name" value="D-RIBOSE PYRANASE"/>
    <property type="match status" value="1"/>
</dbReference>
<dbReference type="Pfam" id="PF05025">
    <property type="entry name" value="RbsD_FucU"/>
    <property type="match status" value="1"/>
</dbReference>
<dbReference type="SUPFAM" id="SSF102546">
    <property type="entry name" value="RbsD-like"/>
    <property type="match status" value="1"/>
</dbReference>
<keyword id="KW-0119">Carbohydrate metabolism</keyword>
<keyword id="KW-0963">Cytoplasm</keyword>
<keyword id="KW-0413">Isomerase</keyword>
<keyword id="KW-1185">Reference proteome</keyword>
<proteinExistence type="inferred from homology"/>
<accession>A8GZV5</accession>
<protein>
    <recommendedName>
        <fullName evidence="1">D-ribose pyranase</fullName>
        <ecNumber evidence="1">5.4.99.62</ecNumber>
    </recommendedName>
</protein>